<organism>
    <name type="scientific">Citrifermentans bemidjiense (strain ATCC BAA-1014 / DSM 16622 / JCM 12645 / Bem)</name>
    <name type="common">Geobacter bemidjiensis</name>
    <dbReference type="NCBI Taxonomy" id="404380"/>
    <lineage>
        <taxon>Bacteria</taxon>
        <taxon>Pseudomonadati</taxon>
        <taxon>Thermodesulfobacteriota</taxon>
        <taxon>Desulfuromonadia</taxon>
        <taxon>Geobacterales</taxon>
        <taxon>Geobacteraceae</taxon>
        <taxon>Citrifermentans</taxon>
    </lineage>
</organism>
<keyword id="KW-1185">Reference proteome</keyword>
<keyword id="KW-0687">Ribonucleoprotein</keyword>
<keyword id="KW-0689">Ribosomal protein</keyword>
<keyword id="KW-0694">RNA-binding</keyword>
<keyword id="KW-0699">rRNA-binding</keyword>
<protein>
    <recommendedName>
        <fullName evidence="1">Large ribosomal subunit protein uL14</fullName>
    </recommendedName>
    <alternativeName>
        <fullName evidence="2">50S ribosomal protein L14</fullName>
    </alternativeName>
</protein>
<reference key="1">
    <citation type="submission" date="2008-07" db="EMBL/GenBank/DDBJ databases">
        <title>Complete sequence of Geobacter bemidjiensis BEM.</title>
        <authorList>
            <consortium name="US DOE Joint Genome Institute"/>
            <person name="Lucas S."/>
            <person name="Copeland A."/>
            <person name="Lapidus A."/>
            <person name="Glavina del Rio T."/>
            <person name="Dalin E."/>
            <person name="Tice H."/>
            <person name="Bruce D."/>
            <person name="Goodwin L."/>
            <person name="Pitluck S."/>
            <person name="Kiss H."/>
            <person name="Brettin T."/>
            <person name="Detter J.C."/>
            <person name="Han C."/>
            <person name="Kuske C.R."/>
            <person name="Schmutz J."/>
            <person name="Larimer F."/>
            <person name="Land M."/>
            <person name="Hauser L."/>
            <person name="Kyrpides N."/>
            <person name="Lykidis A."/>
            <person name="Lovley D."/>
            <person name="Richardson P."/>
        </authorList>
    </citation>
    <scope>NUCLEOTIDE SEQUENCE [LARGE SCALE GENOMIC DNA]</scope>
    <source>
        <strain>ATCC BAA-1014 / DSM 16622 / JCM 12645 / Bem</strain>
    </source>
</reference>
<gene>
    <name evidence="1" type="primary">rplN</name>
    <name type="ordered locus">Gbem_0943</name>
</gene>
<evidence type="ECO:0000255" key="1">
    <source>
        <dbReference type="HAMAP-Rule" id="MF_01367"/>
    </source>
</evidence>
<evidence type="ECO:0000305" key="2"/>
<feature type="chain" id="PRO_1000144277" description="Large ribosomal subunit protein uL14">
    <location>
        <begin position="1"/>
        <end position="122"/>
    </location>
</feature>
<accession>B5EFR0</accession>
<comment type="function">
    <text evidence="1">Binds to 23S rRNA. Forms part of two intersubunit bridges in the 70S ribosome.</text>
</comment>
<comment type="subunit">
    <text evidence="1">Part of the 50S ribosomal subunit. Forms a cluster with proteins L3 and L19. In the 70S ribosome, L14 and L19 interact and together make contacts with the 16S rRNA in bridges B5 and B8.</text>
</comment>
<comment type="similarity">
    <text evidence="1">Belongs to the universal ribosomal protein uL14 family.</text>
</comment>
<proteinExistence type="inferred from homology"/>
<name>RL14_CITBB</name>
<dbReference type="EMBL" id="CP001124">
    <property type="protein sequence ID" value="ACH37964.1"/>
    <property type="molecule type" value="Genomic_DNA"/>
</dbReference>
<dbReference type="RefSeq" id="WP_012529376.1">
    <property type="nucleotide sequence ID" value="NC_011146.1"/>
</dbReference>
<dbReference type="SMR" id="B5EFR0"/>
<dbReference type="STRING" id="404380.Gbem_0943"/>
<dbReference type="KEGG" id="gbm:Gbem_0943"/>
<dbReference type="eggNOG" id="COG0093">
    <property type="taxonomic scope" value="Bacteria"/>
</dbReference>
<dbReference type="HOGENOM" id="CLU_095071_2_1_7"/>
<dbReference type="OrthoDB" id="9806379at2"/>
<dbReference type="Proteomes" id="UP000008825">
    <property type="component" value="Chromosome"/>
</dbReference>
<dbReference type="GO" id="GO:0022625">
    <property type="term" value="C:cytosolic large ribosomal subunit"/>
    <property type="evidence" value="ECO:0007669"/>
    <property type="project" value="TreeGrafter"/>
</dbReference>
<dbReference type="GO" id="GO:0070180">
    <property type="term" value="F:large ribosomal subunit rRNA binding"/>
    <property type="evidence" value="ECO:0007669"/>
    <property type="project" value="TreeGrafter"/>
</dbReference>
<dbReference type="GO" id="GO:0003735">
    <property type="term" value="F:structural constituent of ribosome"/>
    <property type="evidence" value="ECO:0007669"/>
    <property type="project" value="InterPro"/>
</dbReference>
<dbReference type="GO" id="GO:0006412">
    <property type="term" value="P:translation"/>
    <property type="evidence" value="ECO:0007669"/>
    <property type="project" value="UniProtKB-UniRule"/>
</dbReference>
<dbReference type="CDD" id="cd00337">
    <property type="entry name" value="Ribosomal_uL14"/>
    <property type="match status" value="1"/>
</dbReference>
<dbReference type="FunFam" id="2.40.150.20:FF:000001">
    <property type="entry name" value="50S ribosomal protein L14"/>
    <property type="match status" value="1"/>
</dbReference>
<dbReference type="Gene3D" id="2.40.150.20">
    <property type="entry name" value="Ribosomal protein L14"/>
    <property type="match status" value="1"/>
</dbReference>
<dbReference type="HAMAP" id="MF_01367">
    <property type="entry name" value="Ribosomal_uL14"/>
    <property type="match status" value="1"/>
</dbReference>
<dbReference type="InterPro" id="IPR000218">
    <property type="entry name" value="Ribosomal_uL14"/>
</dbReference>
<dbReference type="InterPro" id="IPR005745">
    <property type="entry name" value="Ribosomal_uL14_bac-type"/>
</dbReference>
<dbReference type="InterPro" id="IPR019972">
    <property type="entry name" value="Ribosomal_uL14_CS"/>
</dbReference>
<dbReference type="InterPro" id="IPR036853">
    <property type="entry name" value="Ribosomal_uL14_sf"/>
</dbReference>
<dbReference type="NCBIfam" id="TIGR01067">
    <property type="entry name" value="rplN_bact"/>
    <property type="match status" value="1"/>
</dbReference>
<dbReference type="PANTHER" id="PTHR11761">
    <property type="entry name" value="50S/60S RIBOSOMAL PROTEIN L14/L23"/>
    <property type="match status" value="1"/>
</dbReference>
<dbReference type="PANTHER" id="PTHR11761:SF3">
    <property type="entry name" value="LARGE RIBOSOMAL SUBUNIT PROTEIN UL14M"/>
    <property type="match status" value="1"/>
</dbReference>
<dbReference type="Pfam" id="PF00238">
    <property type="entry name" value="Ribosomal_L14"/>
    <property type="match status" value="1"/>
</dbReference>
<dbReference type="SMART" id="SM01374">
    <property type="entry name" value="Ribosomal_L14"/>
    <property type="match status" value="1"/>
</dbReference>
<dbReference type="SUPFAM" id="SSF50193">
    <property type="entry name" value="Ribosomal protein L14"/>
    <property type="match status" value="1"/>
</dbReference>
<dbReference type="PROSITE" id="PS00049">
    <property type="entry name" value="RIBOSOMAL_L14"/>
    <property type="match status" value="1"/>
</dbReference>
<sequence>MIQMQTLLDVADNSGAKKLFCIKVLGGSKRRYAGIGDIIVASVKEALPNSKVKKGDVVKAVVVRTAKAVGRPDGSYIRFDTNSGVVINNAKEPVGTRIFGPVARELRAKKFMKIISLAPEVL</sequence>